<name>EPIP1_EPING</name>
<sequence>ADGIVAVELDTYRGSFXK</sequence>
<protein>
    <recommendedName>
        <fullName>Major allergen Epi p 1</fullName>
        <ecNumber>3.4.21.-</ecNumber>
    </recommendedName>
    <alternativeName>
        <fullName>Allergen EpI n I4625*</fullName>
    </alternativeName>
    <allergenName>Epi p 1</allergenName>
</protein>
<feature type="chain" id="PRO_0000086988" description="Major allergen Epi p 1">
    <location>
        <begin position="1"/>
        <end position="18" status="greater than"/>
    </location>
</feature>
<feature type="non-consecutive residues" evidence="2">
    <location>
        <begin position="12"/>
        <end position="13"/>
    </location>
</feature>
<feature type="non-terminal residue" evidence="2">
    <location>
        <position position="18"/>
    </location>
</feature>
<comment type="function">
    <text>Has a serine protease activity.</text>
</comment>
<comment type="PTM">
    <text evidence="1 2">Glycosylated.</text>
</comment>
<comment type="mass spectrometry"/>
<comment type="allergen">
    <text>Causes an allergic reaction in human.</text>
</comment>
<evidence type="ECO:0000269" key="1">
    <source>
    </source>
</evidence>
<evidence type="ECO:0000305" key="2"/>
<organism evidence="2">
    <name type="scientific">Epicoccum nigrum</name>
    <name type="common">Soil fungus</name>
    <name type="synonym">Epicoccum purpurascens</name>
    <dbReference type="NCBI Taxonomy" id="105696"/>
    <lineage>
        <taxon>Eukaryota</taxon>
        <taxon>Fungi</taxon>
        <taxon>Dikarya</taxon>
        <taxon>Ascomycota</taxon>
        <taxon>Pezizomycotina</taxon>
        <taxon>Dothideomycetes</taxon>
        <taxon>Pleosporomycetidae</taxon>
        <taxon>Pleosporales</taxon>
        <taxon>Pleosporineae</taxon>
        <taxon>Didymellaceae</taxon>
        <taxon>Epicoccum</taxon>
    </lineage>
</organism>
<keyword id="KW-0020">Allergen</keyword>
<keyword id="KW-0903">Direct protein sequencing</keyword>
<keyword id="KW-0325">Glycoprotein</keyword>
<keyword id="KW-0378">Hydrolase</keyword>
<keyword id="KW-0645">Protease</keyword>
<keyword id="KW-0720">Serine protease</keyword>
<accession>P83340</accession>
<proteinExistence type="evidence at protein level"/>
<dbReference type="EC" id="3.4.21.-"/>
<dbReference type="Allergome" id="3274">
    <property type="allergen name" value="Epi p 1.0101"/>
</dbReference>
<dbReference type="Allergome" id="853">
    <property type="allergen name" value="Epi p 1"/>
</dbReference>
<dbReference type="MEROPS" id="S9G.113"/>
<dbReference type="GO" id="GO:0008236">
    <property type="term" value="F:serine-type peptidase activity"/>
    <property type="evidence" value="ECO:0007669"/>
    <property type="project" value="UniProtKB-KW"/>
</dbReference>
<dbReference type="GO" id="GO:0006508">
    <property type="term" value="P:proteolysis"/>
    <property type="evidence" value="ECO:0007669"/>
    <property type="project" value="UniProtKB-KW"/>
</dbReference>
<dbReference type="InterPro" id="IPR019825">
    <property type="entry name" value="Lectin_legB_Mn/Ca_BS"/>
</dbReference>
<reference key="1">
    <citation type="journal article" date="2004" name="Int. Arch. Allergy Immunol.">
        <title>Purification and characterization of a major cross-reactive allergen from Epicoccum purpurascens.</title>
        <authorList>
            <person name="Bisht V."/>
            <person name="Arora N."/>
            <person name="Singh B.P."/>
            <person name="Gaur S.N."/>
            <person name="Sridhara S."/>
        </authorList>
    </citation>
    <scope>PROTEIN SEQUENCE</scope>
    <scope>GLYCOSYLATION</scope>
    <scope>MASS SPECTROMETRY</scope>
    <source>
        <strain>4625</strain>
        <tissue>Mycelium</tissue>
        <tissue>Spore</tissue>
    </source>
</reference>